<gene>
    <name type="primary">speB</name>
    <name type="ordered locus">spyM18_2099</name>
</gene>
<keyword id="KW-0068">Autocatalytic cleavage</keyword>
<keyword id="KW-1035">Host cytoplasm</keyword>
<keyword id="KW-0378">Hydrolase</keyword>
<keyword id="KW-0488">Methylation</keyword>
<keyword id="KW-0645">Protease</keyword>
<keyword id="KW-0964">Secreted</keyword>
<keyword id="KW-0732">Signal</keyword>
<keyword id="KW-0788">Thiol protease</keyword>
<keyword id="KW-0800">Toxin</keyword>
<keyword id="KW-0843">Virulence</keyword>
<keyword id="KW-0865">Zymogen</keyword>
<sequence>MNKKKLGIRLLSLLALGGFVLANPVFADQNFARNEKEAKDSAITFIQKSAAIKAGARSAEDIKLDKVNLGGELSGSNMYVYNISTGGFVIVSGDKRSPEILGYSTSGSFDANGKENIASFMESYVEQIKENKKLDTTYAGTAEIKQPVVKSLLDSKGIHYNQGNPYNLLTPVIEKVKPGEQSFVGQHAATGCVATATAQIMKYHNYPNKGLKDYTYTLSSNNPYFNHPKNLFAAISTRQYNWNNILPTYSGRESNVQKMAISELMADVGISVDMDYGPSSGSAGSSRVQRALKENFGYNQSVHQINRSDFSKQDWEAQIDKELSQNQPVYYQGVGKVGGHAFVIDGADGRNFYHVNWGWGGVSDGFFRLDALNPSALGTGGGAGGFNGYQSAVVGIKP</sequence>
<proteinExistence type="inferred from homology"/>
<comment type="function">
    <text evidence="2 3">Cysteine protease that acts as a key streptococcal virulence factor by cleaving host proteins involved in immune response (PubMed:7516997). Triggers inflammation by mediating cleavage of host proteins, which can both promote host pathogenesis by triggering sterile inflammation and/or restrict streptococcal infection, depending on host immune statue and infection site (By similarity). Cleaves host gasdermin-A (GSDMA) in epithelial cells, promoting GSDMA activation and formation of gasdermin pores, triggering pyroptosis (By similarity). Pyroptosis triggers the elimination of the infected skin cell, depriving the pathogen of its protective niche, while inducing an inflammatory response (By similarity). This ultimately prevents bacterial penetration of the epithelial barrier and a subsequent systemic dissemination of the pathogen (By similarity). Also mediates cleavage of the cytokine precursor interleukin-1 beta (IL1B) to its mature form, resulting in inflammation and septic shock (By similarity). SpeB-mediated maturation of IL1B plays a dual role depending on infection site: while IL1B inflammatory response prevents bacterial growth during invasive skin infections, it promotes streptococcal infection of the nasopharynx by disrupting colonization resistance mediated by the microbiota (By similarity). Inhibits host autophagy be catalyzing cleavage and inactivation of key autophagy factors, such as CALCOCO2, NBR1 and SQSTM1 (By similarity). Cleaves and inhibits a number of complement factors, such as C2, C3-beta chain of C3, C4, C5 or SERPING1, thereby promoting evasion of host immunity (By similarity). May also impair adaptive immunity by catalyzing cleavage and degradation of host immunoglobulins to promote immune system evasion; the relevance of this activity is however unsure in vivo (By similarity). Catalyzes maturation and release of the peptide hormone bradykinin from the precursor Kininogen-1 (KNG1) to produce hypotension during septic shock (By similarity). Also involved in bacterial translocation across the host epithelial barrier by mediating cleavage and degradation of host epithelial junction proteins, such as CDH1 and OCLN (By similarity). Additionally, has been involved in degradation of fibronectin and vitronectin, two host extracellular matrix proteins involved in tissue integrity (PubMed:7516997). Also able to catalyze cleavage and degradation of streptococcal proteins, such as C5a peptidase, EndoS or SmeZ (By similarity). Degradation of streptococcal proteins is however strictly regulated to preserve integrity of other virulence factors (By similarity).</text>
</comment>
<comment type="catalytic activity">
    <reaction evidence="2">
        <text>Preferential cleavage with hydrophobic residues at P2, P1 and P1'.</text>
        <dbReference type="EC" id="3.4.22.10"/>
    </reaction>
</comment>
<comment type="activity regulation">
    <text evidence="1 2">Synthesized as an inactive zymogen to protect the intracellular components of the bacteria from proteolytic activity during protein production (By similarity). Once secreted into the extracellular milieu, cleaved into the active protease: maturation can be mediated in cis by autocatalytic cleavage, or in trans by mature SpeB or host proteases. Protease activity is strongly inhibited by zinc and copper, which prevent its maturation into an active protease: inhibition by metal ions may be required to prevent proteolysis of streptococcal proteins (By similarity).</text>
</comment>
<comment type="subunit">
    <text evidence="1">Monomer.</text>
</comment>
<comment type="subcellular location">
    <subcellularLocation>
        <location evidence="3">Secreted</location>
    </subcellularLocation>
    <subcellularLocation>
        <location evidence="3">Host extracellular space</location>
    </subcellularLocation>
    <subcellularLocation>
        <location evidence="1">Host cytoplasm</location>
    </subcellularLocation>
</comment>
<comment type="domain">
    <text evidence="1">The C-terminal active site loop is required for the recognition and recruitment of substrates and release of hydrolyzed products.</text>
</comment>
<comment type="PTM">
    <text evidence="2">The mature protease is derived from the precursor sequence by cleavage, either in cis via an autocatalytic mechanism, or in trans by mature SpeB or host proteases (trypsin, plasmin or subtilisin). Maturation can involve a number of protein cleavage intermediates. Mature SpeB probably plays the most important role in protein maturation in physiological conditions.</text>
</comment>
<comment type="PTM">
    <text evidence="1">Methylthiolation at Cys-192 of the inactive zymogen form is probably involved in the mechanism of secretion of the proteinase into the culture fluid.</text>
</comment>
<comment type="similarity">
    <text evidence="4">Belongs to the peptidase C10 family.</text>
</comment>
<feature type="signal peptide" evidence="1">
    <location>
        <begin position="1"/>
        <end position="27"/>
    </location>
</feature>
<feature type="propeptide" id="PRO_0000028509" evidence="1">
    <location>
        <begin position="28"/>
        <end position="145"/>
    </location>
</feature>
<feature type="chain" id="PRO_0000028510" description="Streptopain">
    <location>
        <begin position="146"/>
        <end position="398"/>
    </location>
</feature>
<feature type="region of interest" description="C-terminal active site loop" evidence="1">
    <location>
        <begin position="368"/>
        <end position="390"/>
    </location>
</feature>
<feature type="active site" description="Nucleophile" evidence="1">
    <location>
        <position position="192"/>
    </location>
</feature>
<feature type="active site" description="Proton acceptor" evidence="1">
    <location>
        <position position="340"/>
    </location>
</feature>
<feature type="binding site" evidence="1">
    <location>
        <position position="282"/>
    </location>
    <ligand>
        <name>a protein</name>
        <dbReference type="ChEBI" id="CHEBI:16541"/>
    </ligand>
</feature>
<feature type="binding site" evidence="1">
    <location>
        <position position="339"/>
    </location>
    <ligand>
        <name>a protein</name>
        <dbReference type="ChEBI" id="CHEBI:16541"/>
    </ligand>
</feature>
<feature type="modified residue" description="Cysteine methyl disulfide; in zymogen form" evidence="1">
    <location>
        <position position="192"/>
    </location>
</feature>
<name>SPEB_STRP8</name>
<accession>P68885</accession>
<accession>P00788</accession>
<accession>P26296</accession>
<accession>Q54960</accession>
<accession>Q54961</accession>
<accession>Q54962</accession>
<accession>Q54963</accession>
<accession>Q54964</accession>
<accession>Q54965</accession>
<accession>Q54966</accession>
<accession>Q54967</accession>
<accession>Q54968</accession>
<accession>Q57024</accession>
<accession>Q57082</accession>
<accession>Q57202</accession>
<accession>Q57211</accession>
<accession>Q57212</accession>
<accession>Q9S680</accession>
<reference key="1">
    <citation type="journal article" date="1993" name="Microb. Pathog.">
        <title>A conserved Streptococcus pyogenes extracellular cysteine protease cleaves human fibronectin and degrades vitronectin.</title>
        <authorList>
            <person name="Kapur V."/>
            <person name="Topouzis S."/>
            <person name="Majesky M.W."/>
            <person name="Li L.L."/>
            <person name="Hamrick M.R."/>
            <person name="Hamill R.J."/>
            <person name="Patti J.M."/>
            <person name="Musser J.M."/>
        </authorList>
    </citation>
    <scope>NUCLEOTIDE SEQUENCE [GENOMIC DNA]</scope>
    <scope>FUNCTION</scope>
    <scope>SUBCELLULAR LOCATION</scope>
    <source>
        <strain>156 / Serotype M18</strain>
        <strain>300 / Serotype M18</strain>
    </source>
</reference>
<reference key="2">
    <citation type="journal article" date="2002" name="Proc. Natl. Acad. Sci. U.S.A.">
        <title>Genome sequence and comparative microarray analysis of serotype M18 group A Streptococcus strains associated with acute rheumatic fever outbreaks.</title>
        <authorList>
            <person name="Smoot J.C."/>
            <person name="Barbian K.D."/>
            <person name="Van Gompel J.J."/>
            <person name="Smoot L.M."/>
            <person name="Chaussee M.S."/>
            <person name="Sylva G.L."/>
            <person name="Sturdevant D.E."/>
            <person name="Ricklefs S.M."/>
            <person name="Porcella S.F."/>
            <person name="Parkins L.D."/>
            <person name="Beres S.B."/>
            <person name="Campbell D.S."/>
            <person name="Smith T.M."/>
            <person name="Zhang Q."/>
            <person name="Kapur V."/>
            <person name="Daly J.A."/>
            <person name="Veasy L.G."/>
            <person name="Musser J.M."/>
        </authorList>
    </citation>
    <scope>NUCLEOTIDE SEQUENCE [LARGE SCALE GENOMIC DNA]</scope>
    <source>
        <strain>MGAS8232</strain>
    </source>
</reference>
<evidence type="ECO:0000250" key="1">
    <source>
        <dbReference type="UniProtKB" id="P0C0J0"/>
    </source>
</evidence>
<evidence type="ECO:0000250" key="2">
    <source>
        <dbReference type="UniProtKB" id="P0C0J1"/>
    </source>
</evidence>
<evidence type="ECO:0000269" key="3">
    <source>
    </source>
</evidence>
<evidence type="ECO:0000305" key="4"/>
<dbReference type="EC" id="3.4.22.10"/>
<dbReference type="EMBL" id="L26125">
    <property type="protein sequence ID" value="AAA26979.1"/>
    <property type="molecule type" value="Genomic_DNA"/>
</dbReference>
<dbReference type="EMBL" id="AE009949">
    <property type="protein sequence ID" value="AAL98559.1"/>
    <property type="molecule type" value="Genomic_DNA"/>
</dbReference>
<dbReference type="RefSeq" id="WP_002991253.1">
    <property type="nucleotide sequence ID" value="NC_003485.1"/>
</dbReference>
<dbReference type="BMRB" id="P68885"/>
<dbReference type="SMR" id="P68885"/>
<dbReference type="MEROPS" id="C10.001"/>
<dbReference type="KEGG" id="spm:spyM18_2099"/>
<dbReference type="HOGENOM" id="CLU_716727_0_0_9"/>
<dbReference type="GO" id="GO:0005576">
    <property type="term" value="C:extracellular region"/>
    <property type="evidence" value="ECO:0007669"/>
    <property type="project" value="UniProtKB-SubCell"/>
</dbReference>
<dbReference type="GO" id="GO:0044164">
    <property type="term" value="C:host cell cytosol"/>
    <property type="evidence" value="ECO:0000250"/>
    <property type="project" value="UniProtKB"/>
</dbReference>
<dbReference type="GO" id="GO:0043655">
    <property type="term" value="C:host extracellular space"/>
    <property type="evidence" value="ECO:0000250"/>
    <property type="project" value="UniProtKB"/>
</dbReference>
<dbReference type="GO" id="GO:0004197">
    <property type="term" value="F:cysteine-type endopeptidase activity"/>
    <property type="evidence" value="ECO:0000250"/>
    <property type="project" value="UniProtKB"/>
</dbReference>
<dbReference type="GO" id="GO:0090729">
    <property type="term" value="F:toxin activity"/>
    <property type="evidence" value="ECO:0007669"/>
    <property type="project" value="UniProtKB-KW"/>
</dbReference>
<dbReference type="GO" id="GO:0006508">
    <property type="term" value="P:proteolysis"/>
    <property type="evidence" value="ECO:0007669"/>
    <property type="project" value="UniProtKB-KW"/>
</dbReference>
<dbReference type="GO" id="GO:0034050">
    <property type="term" value="P:symbiont-induced defense-related programmed cell death"/>
    <property type="evidence" value="ECO:0000250"/>
    <property type="project" value="UniProtKB"/>
</dbReference>
<dbReference type="GO" id="GO:0042783">
    <property type="term" value="P:symbiont-mediated evasion of host immune response"/>
    <property type="evidence" value="ECO:0000250"/>
    <property type="project" value="UniProtKB"/>
</dbReference>
<dbReference type="GO" id="GO:0140321">
    <property type="term" value="P:symbiont-mediated suppression of host autophagy"/>
    <property type="evidence" value="ECO:0000250"/>
    <property type="project" value="UniProtKB"/>
</dbReference>
<dbReference type="Gene3D" id="3.90.70.50">
    <property type="entry name" value="Peptidase C10, streptopain"/>
    <property type="match status" value="1"/>
</dbReference>
<dbReference type="InterPro" id="IPR038765">
    <property type="entry name" value="Papain-like_cys_pep_sf"/>
</dbReference>
<dbReference type="InterPro" id="IPR000200">
    <property type="entry name" value="Peptidase_C10"/>
</dbReference>
<dbReference type="InterPro" id="IPR025896">
    <property type="entry name" value="Spi_Prtas-inh"/>
</dbReference>
<dbReference type="InterPro" id="IPR044934">
    <property type="entry name" value="Streptopain_sf"/>
</dbReference>
<dbReference type="Pfam" id="PF13734">
    <property type="entry name" value="Inhibitor_I69"/>
    <property type="match status" value="1"/>
</dbReference>
<dbReference type="Pfam" id="PF01640">
    <property type="entry name" value="Peptidase_C10"/>
    <property type="match status" value="1"/>
</dbReference>
<dbReference type="PRINTS" id="PR00797">
    <property type="entry name" value="STREPTOPAIN"/>
</dbReference>
<dbReference type="SUPFAM" id="SSF54001">
    <property type="entry name" value="Cysteine proteinases"/>
    <property type="match status" value="1"/>
</dbReference>
<organism>
    <name type="scientific">Streptococcus pyogenes serotype M18 (strain MGAS8232)</name>
    <dbReference type="NCBI Taxonomy" id="186103"/>
    <lineage>
        <taxon>Bacteria</taxon>
        <taxon>Bacillati</taxon>
        <taxon>Bacillota</taxon>
        <taxon>Bacilli</taxon>
        <taxon>Lactobacillales</taxon>
        <taxon>Streptococcaceae</taxon>
        <taxon>Streptococcus</taxon>
    </lineage>
</organism>
<protein>
    <recommendedName>
        <fullName>Streptopain</fullName>
        <ecNumber>3.4.22.10</ecNumber>
    </recommendedName>
    <alternativeName>
        <fullName>Exotoxin type B</fullName>
    </alternativeName>
    <alternativeName>
        <fullName>SPE B</fullName>
    </alternativeName>
    <alternativeName>
        <fullName>Streptococcal cysteine proteinase</fullName>
    </alternativeName>
    <alternativeName>
        <fullName>Streptococcus peptidase A</fullName>
        <shortName>SPP</shortName>
    </alternativeName>
</protein>